<evidence type="ECO:0000255" key="1">
    <source>
        <dbReference type="HAMAP-Rule" id="MF_00091"/>
    </source>
</evidence>
<protein>
    <recommendedName>
        <fullName evidence="1">S-ribosylhomocysteine lyase</fullName>
        <ecNumber evidence="1">4.4.1.21</ecNumber>
    </recommendedName>
    <alternativeName>
        <fullName evidence="1">AI-2 synthesis protein</fullName>
    </alternativeName>
    <alternativeName>
        <fullName evidence="1">Autoinducer-2 production protein LuxS</fullName>
    </alternativeName>
</protein>
<proteinExistence type="inferred from homology"/>
<organism>
    <name type="scientific">Yersinia pseudotuberculosis serotype I (strain IP32953)</name>
    <dbReference type="NCBI Taxonomy" id="273123"/>
    <lineage>
        <taxon>Bacteria</taxon>
        <taxon>Pseudomonadati</taxon>
        <taxon>Pseudomonadota</taxon>
        <taxon>Gammaproteobacteria</taxon>
        <taxon>Enterobacterales</taxon>
        <taxon>Yersiniaceae</taxon>
        <taxon>Yersinia</taxon>
    </lineage>
</organism>
<keyword id="KW-0071">Autoinducer synthesis</keyword>
<keyword id="KW-0408">Iron</keyword>
<keyword id="KW-0456">Lyase</keyword>
<keyword id="KW-0479">Metal-binding</keyword>
<keyword id="KW-0673">Quorum sensing</keyword>
<feature type="chain" id="PRO_0000172281" description="S-ribosylhomocysteine lyase">
    <location>
        <begin position="1"/>
        <end position="171"/>
    </location>
</feature>
<feature type="binding site" evidence="1">
    <location>
        <position position="54"/>
    </location>
    <ligand>
        <name>Fe cation</name>
        <dbReference type="ChEBI" id="CHEBI:24875"/>
    </ligand>
</feature>
<feature type="binding site" evidence="1">
    <location>
        <position position="58"/>
    </location>
    <ligand>
        <name>Fe cation</name>
        <dbReference type="ChEBI" id="CHEBI:24875"/>
    </ligand>
</feature>
<feature type="binding site" evidence="1">
    <location>
        <position position="128"/>
    </location>
    <ligand>
        <name>Fe cation</name>
        <dbReference type="ChEBI" id="CHEBI:24875"/>
    </ligand>
</feature>
<dbReference type="EC" id="4.4.1.21" evidence="1"/>
<dbReference type="EMBL" id="BX936398">
    <property type="protein sequence ID" value="CAH20070.1"/>
    <property type="molecule type" value="Genomic_DNA"/>
</dbReference>
<dbReference type="RefSeq" id="WP_002209453.1">
    <property type="nucleotide sequence ID" value="NZ_CP009712.1"/>
</dbReference>
<dbReference type="SMR" id="Q66E63"/>
<dbReference type="GeneID" id="57975413"/>
<dbReference type="KEGG" id="ypo:BZ17_1721"/>
<dbReference type="KEGG" id="yps:YPTB0830"/>
<dbReference type="PATRIC" id="fig|273123.14.peg.1827"/>
<dbReference type="Proteomes" id="UP000001011">
    <property type="component" value="Chromosome"/>
</dbReference>
<dbReference type="GO" id="GO:0005506">
    <property type="term" value="F:iron ion binding"/>
    <property type="evidence" value="ECO:0007669"/>
    <property type="project" value="InterPro"/>
</dbReference>
<dbReference type="GO" id="GO:0043768">
    <property type="term" value="F:S-ribosylhomocysteine lyase activity"/>
    <property type="evidence" value="ECO:0007669"/>
    <property type="project" value="UniProtKB-UniRule"/>
</dbReference>
<dbReference type="GO" id="GO:0009372">
    <property type="term" value="P:quorum sensing"/>
    <property type="evidence" value="ECO:0007669"/>
    <property type="project" value="UniProtKB-UniRule"/>
</dbReference>
<dbReference type="FunFam" id="3.30.1360.80:FF:000001">
    <property type="entry name" value="S-ribosylhomocysteine lyase"/>
    <property type="match status" value="1"/>
</dbReference>
<dbReference type="Gene3D" id="3.30.1360.80">
    <property type="entry name" value="S-ribosylhomocysteinase (LuxS)"/>
    <property type="match status" value="1"/>
</dbReference>
<dbReference type="HAMAP" id="MF_00091">
    <property type="entry name" value="LuxS"/>
    <property type="match status" value="1"/>
</dbReference>
<dbReference type="InterPro" id="IPR037005">
    <property type="entry name" value="LuxS_sf"/>
</dbReference>
<dbReference type="InterPro" id="IPR011249">
    <property type="entry name" value="Metalloenz_LuxS/M16"/>
</dbReference>
<dbReference type="InterPro" id="IPR003815">
    <property type="entry name" value="S-ribosylhomocysteinase"/>
</dbReference>
<dbReference type="NCBIfam" id="NF002602">
    <property type="entry name" value="PRK02260.1-2"/>
    <property type="match status" value="1"/>
</dbReference>
<dbReference type="PANTHER" id="PTHR35799">
    <property type="entry name" value="S-RIBOSYLHOMOCYSTEINE LYASE"/>
    <property type="match status" value="1"/>
</dbReference>
<dbReference type="PANTHER" id="PTHR35799:SF1">
    <property type="entry name" value="S-RIBOSYLHOMOCYSTEINE LYASE"/>
    <property type="match status" value="1"/>
</dbReference>
<dbReference type="Pfam" id="PF02664">
    <property type="entry name" value="LuxS"/>
    <property type="match status" value="1"/>
</dbReference>
<dbReference type="PIRSF" id="PIRSF006160">
    <property type="entry name" value="AI2"/>
    <property type="match status" value="1"/>
</dbReference>
<dbReference type="PRINTS" id="PR01487">
    <property type="entry name" value="LUXSPROTEIN"/>
</dbReference>
<dbReference type="SUPFAM" id="SSF63411">
    <property type="entry name" value="LuxS/MPP-like metallohydrolase"/>
    <property type="match status" value="1"/>
</dbReference>
<name>LUXS_YERPS</name>
<comment type="function">
    <text evidence="1">Involved in the synthesis of autoinducer 2 (AI-2) which is secreted by bacteria and is used to communicate both the cell density and the metabolic potential of the environment. The regulation of gene expression in response to changes in cell density is called quorum sensing. Catalyzes the transformation of S-ribosylhomocysteine (RHC) to homocysteine (HC) and 4,5-dihydroxy-2,3-pentadione (DPD).</text>
</comment>
<comment type="catalytic activity">
    <reaction evidence="1">
        <text>S-(5-deoxy-D-ribos-5-yl)-L-homocysteine = (S)-4,5-dihydroxypentane-2,3-dione + L-homocysteine</text>
        <dbReference type="Rhea" id="RHEA:17753"/>
        <dbReference type="ChEBI" id="CHEBI:29484"/>
        <dbReference type="ChEBI" id="CHEBI:58195"/>
        <dbReference type="ChEBI" id="CHEBI:58199"/>
        <dbReference type="EC" id="4.4.1.21"/>
    </reaction>
</comment>
<comment type="cofactor">
    <cofactor evidence="1">
        <name>Fe cation</name>
        <dbReference type="ChEBI" id="CHEBI:24875"/>
    </cofactor>
    <text evidence="1">Binds 1 Fe cation per subunit.</text>
</comment>
<comment type="subunit">
    <text evidence="1">Homodimer.</text>
</comment>
<comment type="similarity">
    <text evidence="1">Belongs to the LuxS family.</text>
</comment>
<reference key="1">
    <citation type="journal article" date="2004" name="Proc. Natl. Acad. Sci. U.S.A.">
        <title>Insights into the evolution of Yersinia pestis through whole-genome comparison with Yersinia pseudotuberculosis.</title>
        <authorList>
            <person name="Chain P.S.G."/>
            <person name="Carniel E."/>
            <person name="Larimer F.W."/>
            <person name="Lamerdin J."/>
            <person name="Stoutland P.O."/>
            <person name="Regala W.M."/>
            <person name="Georgescu A.M."/>
            <person name="Vergez L.M."/>
            <person name="Land M.L."/>
            <person name="Motin V.L."/>
            <person name="Brubaker R.R."/>
            <person name="Fowler J."/>
            <person name="Hinnebusch J."/>
            <person name="Marceau M."/>
            <person name="Medigue C."/>
            <person name="Simonet M."/>
            <person name="Chenal-Francisque V."/>
            <person name="Souza B."/>
            <person name="Dacheux D."/>
            <person name="Elliott J.M."/>
            <person name="Derbise A."/>
            <person name="Hauser L.J."/>
            <person name="Garcia E."/>
        </authorList>
    </citation>
    <scope>NUCLEOTIDE SEQUENCE [LARGE SCALE GENOMIC DNA]</scope>
    <source>
        <strain>IP32953</strain>
    </source>
</reference>
<sequence>MPLLDSFTVDHTIMKAPAVRVAKTMKTPHGDEITVFDLRFCVPNKEVMPEKGIHTLEHLFAGFMRDHLNGDGVEIIDISPMGCRTGFYMSLIGTPDEQRVADAWKAAMADVLKVTDQRKIPELNEYQCGTYHMHSLEEAQSIAKDILDRDVRINHNEELALPKEKLTELHI</sequence>
<accession>Q66E63</accession>
<gene>
    <name evidence="1" type="primary">luxS</name>
    <name type="ordered locus">YPTB0830</name>
</gene>